<dbReference type="EMBL" id="CP000702">
    <property type="protein sequence ID" value="ABQ46093.1"/>
    <property type="molecule type" value="Genomic_DNA"/>
</dbReference>
<dbReference type="RefSeq" id="WP_011942767.1">
    <property type="nucleotide sequence ID" value="NC_009486.1"/>
</dbReference>
<dbReference type="SMR" id="A5IIS0"/>
<dbReference type="STRING" id="390874.Tpet_0064"/>
<dbReference type="KEGG" id="tpt:Tpet_0064"/>
<dbReference type="eggNOG" id="COG0359">
    <property type="taxonomic scope" value="Bacteria"/>
</dbReference>
<dbReference type="HOGENOM" id="CLU_078938_3_0_0"/>
<dbReference type="Proteomes" id="UP000006558">
    <property type="component" value="Chromosome"/>
</dbReference>
<dbReference type="GO" id="GO:1990904">
    <property type="term" value="C:ribonucleoprotein complex"/>
    <property type="evidence" value="ECO:0007669"/>
    <property type="project" value="UniProtKB-KW"/>
</dbReference>
<dbReference type="GO" id="GO:0005840">
    <property type="term" value="C:ribosome"/>
    <property type="evidence" value="ECO:0007669"/>
    <property type="project" value="UniProtKB-KW"/>
</dbReference>
<dbReference type="GO" id="GO:0019843">
    <property type="term" value="F:rRNA binding"/>
    <property type="evidence" value="ECO:0007669"/>
    <property type="project" value="UniProtKB-UniRule"/>
</dbReference>
<dbReference type="GO" id="GO:0003735">
    <property type="term" value="F:structural constituent of ribosome"/>
    <property type="evidence" value="ECO:0007669"/>
    <property type="project" value="InterPro"/>
</dbReference>
<dbReference type="GO" id="GO:0006412">
    <property type="term" value="P:translation"/>
    <property type="evidence" value="ECO:0007669"/>
    <property type="project" value="UniProtKB-UniRule"/>
</dbReference>
<dbReference type="FunFam" id="3.40.5.10:FF:000002">
    <property type="entry name" value="50S ribosomal protein L9"/>
    <property type="match status" value="1"/>
</dbReference>
<dbReference type="Gene3D" id="3.10.430.100">
    <property type="entry name" value="Ribosomal protein L9, C-terminal domain"/>
    <property type="match status" value="1"/>
</dbReference>
<dbReference type="Gene3D" id="3.40.5.10">
    <property type="entry name" value="Ribosomal protein L9, N-terminal domain"/>
    <property type="match status" value="1"/>
</dbReference>
<dbReference type="HAMAP" id="MF_00503">
    <property type="entry name" value="Ribosomal_bL9"/>
    <property type="match status" value="1"/>
</dbReference>
<dbReference type="InterPro" id="IPR000244">
    <property type="entry name" value="Ribosomal_bL9"/>
</dbReference>
<dbReference type="InterPro" id="IPR009027">
    <property type="entry name" value="Ribosomal_bL9/RNase_H1_N"/>
</dbReference>
<dbReference type="InterPro" id="IPR020594">
    <property type="entry name" value="Ribosomal_bL9_bac/chp"/>
</dbReference>
<dbReference type="InterPro" id="IPR020069">
    <property type="entry name" value="Ribosomal_bL9_C"/>
</dbReference>
<dbReference type="InterPro" id="IPR036791">
    <property type="entry name" value="Ribosomal_bL9_C_sf"/>
</dbReference>
<dbReference type="InterPro" id="IPR020070">
    <property type="entry name" value="Ribosomal_bL9_N"/>
</dbReference>
<dbReference type="InterPro" id="IPR036935">
    <property type="entry name" value="Ribosomal_bL9_N_sf"/>
</dbReference>
<dbReference type="NCBIfam" id="TIGR00158">
    <property type="entry name" value="L9"/>
    <property type="match status" value="1"/>
</dbReference>
<dbReference type="PANTHER" id="PTHR21368">
    <property type="entry name" value="50S RIBOSOMAL PROTEIN L9"/>
    <property type="match status" value="1"/>
</dbReference>
<dbReference type="Pfam" id="PF03948">
    <property type="entry name" value="Ribosomal_L9_C"/>
    <property type="match status" value="1"/>
</dbReference>
<dbReference type="Pfam" id="PF01281">
    <property type="entry name" value="Ribosomal_L9_N"/>
    <property type="match status" value="1"/>
</dbReference>
<dbReference type="SUPFAM" id="SSF55658">
    <property type="entry name" value="L9 N-domain-like"/>
    <property type="match status" value="1"/>
</dbReference>
<dbReference type="SUPFAM" id="SSF55653">
    <property type="entry name" value="Ribosomal protein L9 C-domain"/>
    <property type="match status" value="1"/>
</dbReference>
<dbReference type="PROSITE" id="PS00651">
    <property type="entry name" value="RIBOSOMAL_L9"/>
    <property type="match status" value="1"/>
</dbReference>
<evidence type="ECO:0000255" key="1">
    <source>
        <dbReference type="HAMAP-Rule" id="MF_00503"/>
    </source>
</evidence>
<evidence type="ECO:0000305" key="2"/>
<comment type="function">
    <text evidence="1">Binds to the 23S rRNA.</text>
</comment>
<comment type="similarity">
    <text evidence="1">Belongs to the bacterial ribosomal protein bL9 family.</text>
</comment>
<feature type="chain" id="PRO_1000014880" description="Large ribosomal subunit protein bL9">
    <location>
        <begin position="1"/>
        <end position="149"/>
    </location>
</feature>
<name>RL9_THEP1</name>
<gene>
    <name evidence="1" type="primary">rplI</name>
    <name type="ordered locus">Tpet_0064</name>
</gene>
<organism>
    <name type="scientific">Thermotoga petrophila (strain ATCC BAA-488 / DSM 13995 / JCM 10881 / RKU-1)</name>
    <dbReference type="NCBI Taxonomy" id="390874"/>
    <lineage>
        <taxon>Bacteria</taxon>
        <taxon>Thermotogati</taxon>
        <taxon>Thermotogota</taxon>
        <taxon>Thermotogae</taxon>
        <taxon>Thermotogales</taxon>
        <taxon>Thermotogaceae</taxon>
        <taxon>Thermotoga</taxon>
    </lineage>
</organism>
<reference key="1">
    <citation type="submission" date="2007-05" db="EMBL/GenBank/DDBJ databases">
        <title>Complete sequence of Thermotoga petrophila RKU-1.</title>
        <authorList>
            <consortium name="US DOE Joint Genome Institute"/>
            <person name="Copeland A."/>
            <person name="Lucas S."/>
            <person name="Lapidus A."/>
            <person name="Barry K."/>
            <person name="Glavina del Rio T."/>
            <person name="Dalin E."/>
            <person name="Tice H."/>
            <person name="Pitluck S."/>
            <person name="Sims D."/>
            <person name="Brettin T."/>
            <person name="Bruce D."/>
            <person name="Detter J.C."/>
            <person name="Han C."/>
            <person name="Tapia R."/>
            <person name="Schmutz J."/>
            <person name="Larimer F."/>
            <person name="Land M."/>
            <person name="Hauser L."/>
            <person name="Kyrpides N."/>
            <person name="Mikhailova N."/>
            <person name="Nelson K."/>
            <person name="Gogarten J.P."/>
            <person name="Noll K."/>
            <person name="Richardson P."/>
        </authorList>
    </citation>
    <scope>NUCLEOTIDE SEQUENCE [LARGE SCALE GENOMIC DNA]</scope>
    <source>
        <strain>ATCC BAA-488 / DSM 13995 / JCM 10881 / RKU-1</strain>
    </source>
</reference>
<keyword id="KW-0687">Ribonucleoprotein</keyword>
<keyword id="KW-0689">Ribosomal protein</keyword>
<keyword id="KW-0694">RNA-binding</keyword>
<keyword id="KW-0699">rRNA-binding</keyword>
<sequence length="149" mass="17075">MKVILLRDVPKIGKKGEIKEVSDGYARNYLIPRGFAKEYTEGLERAIKHEKEIEKRKKEREREESEKILKELKKRTHVVKVKAGEGGKIFGAVTAATLAEEISKTTGLKLDKRWFKLDKPIKELGEYSLEVNLPGGVKDTIKIKVEREE</sequence>
<protein>
    <recommendedName>
        <fullName evidence="1">Large ribosomal subunit protein bL9</fullName>
    </recommendedName>
    <alternativeName>
        <fullName evidence="2">50S ribosomal protein L9</fullName>
    </alternativeName>
</protein>
<accession>A5IIS0</accession>
<proteinExistence type="inferred from homology"/>